<accession>Q5BBL3</accession>
<accession>C8VLP3</accession>
<feature type="chain" id="PRO_0000237630" description="Serine/threonine-protein kinase ste20">
    <location>
        <begin position="1"/>
        <end position="848"/>
    </location>
</feature>
<feature type="domain" description="CRIB" evidence="2">
    <location>
        <begin position="239"/>
        <end position="252"/>
    </location>
</feature>
<feature type="domain" description="Protein kinase" evidence="3">
    <location>
        <begin position="567"/>
        <end position="818"/>
    </location>
</feature>
<feature type="region of interest" description="Disordered" evidence="5">
    <location>
        <begin position="1"/>
        <end position="227"/>
    </location>
</feature>
<feature type="region of interest" description="Disordered" evidence="5">
    <location>
        <begin position="315"/>
        <end position="548"/>
    </location>
</feature>
<feature type="compositionally biased region" description="Polar residues" evidence="5">
    <location>
        <begin position="29"/>
        <end position="38"/>
    </location>
</feature>
<feature type="compositionally biased region" description="Polar residues" evidence="5">
    <location>
        <begin position="63"/>
        <end position="80"/>
    </location>
</feature>
<feature type="compositionally biased region" description="Low complexity" evidence="5">
    <location>
        <begin position="101"/>
        <end position="110"/>
    </location>
</feature>
<feature type="compositionally biased region" description="Basic and acidic residues" evidence="5">
    <location>
        <begin position="133"/>
        <end position="142"/>
    </location>
</feature>
<feature type="compositionally biased region" description="Polar residues" evidence="5">
    <location>
        <begin position="161"/>
        <end position="180"/>
    </location>
</feature>
<feature type="compositionally biased region" description="Polar residues" evidence="5">
    <location>
        <begin position="315"/>
        <end position="339"/>
    </location>
</feature>
<feature type="compositionally biased region" description="Polar residues" evidence="5">
    <location>
        <begin position="409"/>
        <end position="427"/>
    </location>
</feature>
<feature type="compositionally biased region" description="Polar residues" evidence="5">
    <location>
        <begin position="440"/>
        <end position="454"/>
    </location>
</feature>
<feature type="compositionally biased region" description="Low complexity" evidence="5">
    <location>
        <begin position="467"/>
        <end position="482"/>
    </location>
</feature>
<feature type="compositionally biased region" description="Low complexity" evidence="5">
    <location>
        <begin position="524"/>
        <end position="537"/>
    </location>
</feature>
<feature type="active site" description="Proton acceptor" evidence="3 4">
    <location>
        <position position="686"/>
    </location>
</feature>
<feature type="binding site" evidence="3">
    <location>
        <begin position="573"/>
        <end position="581"/>
    </location>
    <ligand>
        <name>ATP</name>
        <dbReference type="ChEBI" id="CHEBI:30616"/>
    </ligand>
</feature>
<feature type="binding site" evidence="3">
    <location>
        <position position="596"/>
    </location>
    <ligand>
        <name>ATP</name>
        <dbReference type="ChEBI" id="CHEBI:30616"/>
    </ligand>
</feature>
<dbReference type="EC" id="2.7.11.1"/>
<dbReference type="EMBL" id="AACD01000032">
    <property type="protein sequence ID" value="EAA64899.1"/>
    <property type="molecule type" value="Genomic_DNA"/>
</dbReference>
<dbReference type="EMBL" id="BN001307">
    <property type="protein sequence ID" value="CBF86111.1"/>
    <property type="molecule type" value="Genomic_DNA"/>
</dbReference>
<dbReference type="RefSeq" id="XP_659671.1">
    <property type="nucleotide sequence ID" value="XM_654579.1"/>
</dbReference>
<dbReference type="SMR" id="Q5BBL3"/>
<dbReference type="FunCoup" id="Q5BBL3">
    <property type="interactions" value="362"/>
</dbReference>
<dbReference type="STRING" id="227321.Q5BBL3"/>
<dbReference type="EnsemblFungi" id="CBF86111">
    <property type="protein sequence ID" value="CBF86111"/>
    <property type="gene ID" value="ANIA_02067"/>
</dbReference>
<dbReference type="KEGG" id="ani:ANIA_02067"/>
<dbReference type="VEuPathDB" id="FungiDB:AN2067"/>
<dbReference type="eggNOG" id="KOG0578">
    <property type="taxonomic scope" value="Eukaryota"/>
</dbReference>
<dbReference type="HOGENOM" id="CLU_000288_26_1_1"/>
<dbReference type="InParanoid" id="Q5BBL3"/>
<dbReference type="OMA" id="MVDIMKF"/>
<dbReference type="OrthoDB" id="248923at2759"/>
<dbReference type="Proteomes" id="UP000000560">
    <property type="component" value="Chromosome VII"/>
</dbReference>
<dbReference type="GO" id="GO:0005737">
    <property type="term" value="C:cytoplasm"/>
    <property type="evidence" value="ECO:0000318"/>
    <property type="project" value="GO_Central"/>
</dbReference>
<dbReference type="GO" id="GO:0000131">
    <property type="term" value="C:incipient cellular bud site"/>
    <property type="evidence" value="ECO:0007669"/>
    <property type="project" value="EnsemblFungi"/>
</dbReference>
<dbReference type="GO" id="GO:0043332">
    <property type="term" value="C:mating projection tip"/>
    <property type="evidence" value="ECO:0007669"/>
    <property type="project" value="EnsemblFungi"/>
</dbReference>
<dbReference type="GO" id="GO:0005634">
    <property type="term" value="C:nucleus"/>
    <property type="evidence" value="ECO:0007669"/>
    <property type="project" value="UniProtKB-SubCell"/>
</dbReference>
<dbReference type="GO" id="GO:0005524">
    <property type="term" value="F:ATP binding"/>
    <property type="evidence" value="ECO:0007669"/>
    <property type="project" value="UniProtKB-KW"/>
</dbReference>
<dbReference type="GO" id="GO:0044025">
    <property type="term" value="F:histone H2BS14 kinase activity"/>
    <property type="evidence" value="ECO:0007669"/>
    <property type="project" value="EnsemblFungi"/>
</dbReference>
<dbReference type="GO" id="GO:0008349">
    <property type="term" value="F:MAP kinase kinase kinase kinase activity"/>
    <property type="evidence" value="ECO:0007669"/>
    <property type="project" value="EnsemblFungi"/>
</dbReference>
<dbReference type="GO" id="GO:0106310">
    <property type="term" value="F:protein serine kinase activity"/>
    <property type="evidence" value="ECO:0007669"/>
    <property type="project" value="RHEA"/>
</dbReference>
<dbReference type="GO" id="GO:0004674">
    <property type="term" value="F:protein serine/threonine kinase activity"/>
    <property type="evidence" value="ECO:0000318"/>
    <property type="project" value="GO_Central"/>
</dbReference>
<dbReference type="GO" id="GO:0007121">
    <property type="term" value="P:bipolar cellular bud site selection"/>
    <property type="evidence" value="ECO:0007669"/>
    <property type="project" value="EnsemblFungi"/>
</dbReference>
<dbReference type="GO" id="GO:0007118">
    <property type="term" value="P:budding cell apical bud growth"/>
    <property type="evidence" value="ECO:0007669"/>
    <property type="project" value="EnsemblFungi"/>
</dbReference>
<dbReference type="GO" id="GO:0070301">
    <property type="term" value="P:cellular response to hydrogen peroxide"/>
    <property type="evidence" value="ECO:0007669"/>
    <property type="project" value="EnsemblFungi"/>
</dbReference>
<dbReference type="GO" id="GO:0009267">
    <property type="term" value="P:cellular response to starvation"/>
    <property type="evidence" value="ECO:0000318"/>
    <property type="project" value="GO_Central"/>
</dbReference>
<dbReference type="GO" id="GO:0035556">
    <property type="term" value="P:intracellular signal transduction"/>
    <property type="evidence" value="ECO:0000318"/>
    <property type="project" value="GO_Central"/>
</dbReference>
<dbReference type="GO" id="GO:0001403">
    <property type="term" value="P:invasive growth in response to glucose limitation"/>
    <property type="evidence" value="ECO:0007669"/>
    <property type="project" value="EnsemblFungi"/>
</dbReference>
<dbReference type="GO" id="GO:0010629">
    <property type="term" value="P:negative regulation of gene expression"/>
    <property type="evidence" value="ECO:0007669"/>
    <property type="project" value="EnsemblFungi"/>
</dbReference>
<dbReference type="GO" id="GO:2000910">
    <property type="term" value="P:negative regulation of sterol import"/>
    <property type="evidence" value="ECO:0007669"/>
    <property type="project" value="EnsemblFungi"/>
</dbReference>
<dbReference type="GO" id="GO:0000122">
    <property type="term" value="P:negative regulation of transcription by RNA polymerase II"/>
    <property type="evidence" value="ECO:0007669"/>
    <property type="project" value="EnsemblFungi"/>
</dbReference>
<dbReference type="GO" id="GO:0007232">
    <property type="term" value="P:osmosensory signaling pathway via Sho1 osmosensor"/>
    <property type="evidence" value="ECO:0007669"/>
    <property type="project" value="EnsemblFungi"/>
</dbReference>
<dbReference type="GO" id="GO:0000750">
    <property type="term" value="P:pheromone-dependent signal transduction involved in conjugation with cellular fusion"/>
    <property type="evidence" value="ECO:0007669"/>
    <property type="project" value="EnsemblFungi"/>
</dbReference>
<dbReference type="GO" id="GO:0043065">
    <property type="term" value="P:positive regulation of apoptotic process"/>
    <property type="evidence" value="ECO:0007669"/>
    <property type="project" value="EnsemblFungi"/>
</dbReference>
<dbReference type="GO" id="GO:0007124">
    <property type="term" value="P:pseudohyphal growth"/>
    <property type="evidence" value="ECO:0007669"/>
    <property type="project" value="EnsemblFungi"/>
</dbReference>
<dbReference type="GO" id="GO:0007096">
    <property type="term" value="P:regulation of exit from mitosis"/>
    <property type="evidence" value="ECO:0007669"/>
    <property type="project" value="EnsemblFungi"/>
</dbReference>
<dbReference type="GO" id="GO:0043408">
    <property type="term" value="P:regulation of MAPK cascade"/>
    <property type="evidence" value="ECO:0000318"/>
    <property type="project" value="GO_Central"/>
</dbReference>
<dbReference type="GO" id="GO:0001402">
    <property type="term" value="P:signal transduction involved in filamentous growth"/>
    <property type="evidence" value="ECO:0007669"/>
    <property type="project" value="EnsemblFungi"/>
</dbReference>
<dbReference type="GO" id="GO:0035376">
    <property type="term" value="P:sterol import"/>
    <property type="evidence" value="ECO:0007669"/>
    <property type="project" value="EnsemblFungi"/>
</dbReference>
<dbReference type="GO" id="GO:0034063">
    <property type="term" value="P:stress granule assembly"/>
    <property type="evidence" value="ECO:0007669"/>
    <property type="project" value="EnsemblFungi"/>
</dbReference>
<dbReference type="GO" id="GO:0000011">
    <property type="term" value="P:vacuole inheritance"/>
    <property type="evidence" value="ECO:0007669"/>
    <property type="project" value="EnsemblFungi"/>
</dbReference>
<dbReference type="CDD" id="cd01093">
    <property type="entry name" value="CRIB_PAK_like"/>
    <property type="match status" value="1"/>
</dbReference>
<dbReference type="CDD" id="cd06614">
    <property type="entry name" value="STKc_PAK"/>
    <property type="match status" value="1"/>
</dbReference>
<dbReference type="FunFam" id="1.10.510.10:FF:000011">
    <property type="entry name" value="Non-specific serine/threonine protein kinase"/>
    <property type="match status" value="1"/>
</dbReference>
<dbReference type="FunFam" id="3.30.200.20:FF:000385">
    <property type="entry name" value="Non-specific serine/threonine protein kinase"/>
    <property type="match status" value="1"/>
</dbReference>
<dbReference type="FunFam" id="3.90.810.10:FF:000007">
    <property type="entry name" value="Non-specific serine/threonine protein kinase"/>
    <property type="match status" value="1"/>
</dbReference>
<dbReference type="Gene3D" id="3.90.810.10">
    <property type="entry name" value="CRIB domain"/>
    <property type="match status" value="1"/>
</dbReference>
<dbReference type="Gene3D" id="3.30.200.20">
    <property type="entry name" value="Phosphorylase Kinase, domain 1"/>
    <property type="match status" value="1"/>
</dbReference>
<dbReference type="Gene3D" id="1.10.510.10">
    <property type="entry name" value="Transferase(Phosphotransferase) domain 1"/>
    <property type="match status" value="1"/>
</dbReference>
<dbReference type="InterPro" id="IPR000095">
    <property type="entry name" value="CRIB_dom"/>
</dbReference>
<dbReference type="InterPro" id="IPR036936">
    <property type="entry name" value="CRIB_dom_sf"/>
</dbReference>
<dbReference type="InterPro" id="IPR011009">
    <property type="entry name" value="Kinase-like_dom_sf"/>
</dbReference>
<dbReference type="InterPro" id="IPR051931">
    <property type="entry name" value="PAK3-like"/>
</dbReference>
<dbReference type="InterPro" id="IPR033923">
    <property type="entry name" value="PAK_BD"/>
</dbReference>
<dbReference type="InterPro" id="IPR000719">
    <property type="entry name" value="Prot_kinase_dom"/>
</dbReference>
<dbReference type="InterPro" id="IPR017441">
    <property type="entry name" value="Protein_kinase_ATP_BS"/>
</dbReference>
<dbReference type="InterPro" id="IPR008271">
    <property type="entry name" value="Ser/Thr_kinase_AS"/>
</dbReference>
<dbReference type="PANTHER" id="PTHR45832">
    <property type="entry name" value="SERINE/THREONINE-PROTEIN KINASE SAMKA-RELATED-RELATED"/>
    <property type="match status" value="1"/>
</dbReference>
<dbReference type="PANTHER" id="PTHR45832:SF22">
    <property type="entry name" value="SERINE_THREONINE-PROTEIN KINASE SAMKA-RELATED"/>
    <property type="match status" value="1"/>
</dbReference>
<dbReference type="Pfam" id="PF00786">
    <property type="entry name" value="PBD"/>
    <property type="match status" value="1"/>
</dbReference>
<dbReference type="Pfam" id="PF00069">
    <property type="entry name" value="Pkinase"/>
    <property type="match status" value="1"/>
</dbReference>
<dbReference type="SMART" id="SM00285">
    <property type="entry name" value="PBD"/>
    <property type="match status" value="1"/>
</dbReference>
<dbReference type="SMART" id="SM00220">
    <property type="entry name" value="S_TKc"/>
    <property type="match status" value="1"/>
</dbReference>
<dbReference type="SUPFAM" id="SSF56112">
    <property type="entry name" value="Protein kinase-like (PK-like)"/>
    <property type="match status" value="1"/>
</dbReference>
<dbReference type="PROSITE" id="PS50108">
    <property type="entry name" value="CRIB"/>
    <property type="match status" value="1"/>
</dbReference>
<dbReference type="PROSITE" id="PS00107">
    <property type="entry name" value="PROTEIN_KINASE_ATP"/>
    <property type="match status" value="1"/>
</dbReference>
<dbReference type="PROSITE" id="PS50011">
    <property type="entry name" value="PROTEIN_KINASE_DOM"/>
    <property type="match status" value="1"/>
</dbReference>
<dbReference type="PROSITE" id="PS00108">
    <property type="entry name" value="PROTEIN_KINASE_ST"/>
    <property type="match status" value="1"/>
</dbReference>
<keyword id="KW-0067">ATP-binding</keyword>
<keyword id="KW-0963">Cytoplasm</keyword>
<keyword id="KW-0418">Kinase</keyword>
<keyword id="KW-0547">Nucleotide-binding</keyword>
<keyword id="KW-0539">Nucleus</keyword>
<keyword id="KW-0589">Pheromone response</keyword>
<keyword id="KW-1185">Reference proteome</keyword>
<keyword id="KW-0723">Serine/threonine-protein kinase</keyword>
<keyword id="KW-0808">Transferase</keyword>
<reference key="1">
    <citation type="journal article" date="2005" name="Nature">
        <title>Sequencing of Aspergillus nidulans and comparative analysis with A. fumigatus and A. oryzae.</title>
        <authorList>
            <person name="Galagan J.E."/>
            <person name="Calvo S.E."/>
            <person name="Cuomo C."/>
            <person name="Ma L.-J."/>
            <person name="Wortman J.R."/>
            <person name="Batzoglou S."/>
            <person name="Lee S.-I."/>
            <person name="Bastuerkmen M."/>
            <person name="Spevak C.C."/>
            <person name="Clutterbuck J."/>
            <person name="Kapitonov V."/>
            <person name="Jurka J."/>
            <person name="Scazzocchio C."/>
            <person name="Farman M.L."/>
            <person name="Butler J."/>
            <person name="Purcell S."/>
            <person name="Harris S."/>
            <person name="Braus G.H."/>
            <person name="Draht O."/>
            <person name="Busch S."/>
            <person name="D'Enfert C."/>
            <person name="Bouchier C."/>
            <person name="Goldman G.H."/>
            <person name="Bell-Pedersen D."/>
            <person name="Griffiths-Jones S."/>
            <person name="Doonan J.H."/>
            <person name="Yu J."/>
            <person name="Vienken K."/>
            <person name="Pain A."/>
            <person name="Freitag M."/>
            <person name="Selker E.U."/>
            <person name="Archer D.B."/>
            <person name="Penalva M.A."/>
            <person name="Oakley B.R."/>
            <person name="Momany M."/>
            <person name="Tanaka T."/>
            <person name="Kumagai T."/>
            <person name="Asai K."/>
            <person name="Machida M."/>
            <person name="Nierman W.C."/>
            <person name="Denning D.W."/>
            <person name="Caddick M.X."/>
            <person name="Hynes M."/>
            <person name="Paoletti M."/>
            <person name="Fischer R."/>
            <person name="Miller B.L."/>
            <person name="Dyer P.S."/>
            <person name="Sachs M.S."/>
            <person name="Osmani S.A."/>
            <person name="Birren B.W."/>
        </authorList>
    </citation>
    <scope>NUCLEOTIDE SEQUENCE [LARGE SCALE GENOMIC DNA]</scope>
    <source>
        <strain>FGSC A4 / ATCC 38163 / CBS 112.46 / NRRL 194 / M139</strain>
    </source>
</reference>
<reference key="2">
    <citation type="journal article" date="2009" name="Fungal Genet. Biol.">
        <title>The 2008 update of the Aspergillus nidulans genome annotation: a community effort.</title>
        <authorList>
            <person name="Wortman J.R."/>
            <person name="Gilsenan J.M."/>
            <person name="Joardar V."/>
            <person name="Deegan J."/>
            <person name="Clutterbuck J."/>
            <person name="Andersen M.R."/>
            <person name="Archer D."/>
            <person name="Bencina M."/>
            <person name="Braus G."/>
            <person name="Coutinho P."/>
            <person name="von Dohren H."/>
            <person name="Doonan J."/>
            <person name="Driessen A.J."/>
            <person name="Durek P."/>
            <person name="Espeso E."/>
            <person name="Fekete E."/>
            <person name="Flipphi M."/>
            <person name="Estrada C.G."/>
            <person name="Geysens S."/>
            <person name="Goldman G."/>
            <person name="de Groot P.W."/>
            <person name="Hansen K."/>
            <person name="Harris S.D."/>
            <person name="Heinekamp T."/>
            <person name="Helmstaedt K."/>
            <person name="Henrissat B."/>
            <person name="Hofmann G."/>
            <person name="Homan T."/>
            <person name="Horio T."/>
            <person name="Horiuchi H."/>
            <person name="James S."/>
            <person name="Jones M."/>
            <person name="Karaffa L."/>
            <person name="Karanyi Z."/>
            <person name="Kato M."/>
            <person name="Keller N."/>
            <person name="Kelly D.E."/>
            <person name="Kiel J.A."/>
            <person name="Kim J.M."/>
            <person name="van der Klei I.J."/>
            <person name="Klis F.M."/>
            <person name="Kovalchuk A."/>
            <person name="Krasevec N."/>
            <person name="Kubicek C.P."/>
            <person name="Liu B."/>
            <person name="Maccabe A."/>
            <person name="Meyer V."/>
            <person name="Mirabito P."/>
            <person name="Miskei M."/>
            <person name="Mos M."/>
            <person name="Mullins J."/>
            <person name="Nelson D.R."/>
            <person name="Nielsen J."/>
            <person name="Oakley B.R."/>
            <person name="Osmani S.A."/>
            <person name="Pakula T."/>
            <person name="Paszewski A."/>
            <person name="Paulsen I."/>
            <person name="Pilsyk S."/>
            <person name="Pocsi I."/>
            <person name="Punt P.J."/>
            <person name="Ram A.F."/>
            <person name="Ren Q."/>
            <person name="Robellet X."/>
            <person name="Robson G."/>
            <person name="Seiboth B."/>
            <person name="van Solingen P."/>
            <person name="Specht T."/>
            <person name="Sun J."/>
            <person name="Taheri-Talesh N."/>
            <person name="Takeshita N."/>
            <person name="Ussery D."/>
            <person name="vanKuyk P.A."/>
            <person name="Visser H."/>
            <person name="van de Vondervoort P.J."/>
            <person name="de Vries R.P."/>
            <person name="Walton J."/>
            <person name="Xiang X."/>
            <person name="Xiong Y."/>
            <person name="Zeng A.P."/>
            <person name="Brandt B.W."/>
            <person name="Cornell M.J."/>
            <person name="van den Hondel C.A."/>
            <person name="Visser J."/>
            <person name="Oliver S.G."/>
            <person name="Turner G."/>
        </authorList>
    </citation>
    <scope>GENOME REANNOTATION</scope>
    <source>
        <strain>FGSC A4 / ATCC 38163 / CBS 112.46 / NRRL 194 / M139</strain>
    </source>
</reference>
<organism>
    <name type="scientific">Emericella nidulans (strain FGSC A4 / ATCC 38163 / CBS 112.46 / NRRL 194 / M139)</name>
    <name type="common">Aspergillus nidulans</name>
    <dbReference type="NCBI Taxonomy" id="227321"/>
    <lineage>
        <taxon>Eukaryota</taxon>
        <taxon>Fungi</taxon>
        <taxon>Dikarya</taxon>
        <taxon>Ascomycota</taxon>
        <taxon>Pezizomycotina</taxon>
        <taxon>Eurotiomycetes</taxon>
        <taxon>Eurotiomycetidae</taxon>
        <taxon>Eurotiales</taxon>
        <taxon>Aspergillaceae</taxon>
        <taxon>Aspergillus</taxon>
        <taxon>Aspergillus subgen. Nidulantes</taxon>
    </lineage>
</organism>
<gene>
    <name type="primary">ste20</name>
    <name type="ORF">AN2067</name>
</gene>
<sequence>MNNDSFSSFKFRRPSSKLHKDPPGYGSRALNSQQSTTSLKRHPSAPVYPRSSAAGSREHLRTRSNAYGSSSSSLDQNSAGASPVLGSSDSGHFHSSHSSRSRPPYSGRFSLNDQSSDELIGAPFDSRGMLSALEEHTAEPDNRSYQPPDPAERYTEKPPNFRSQTTPNPRALRQSASFTTLPPRMEAFPNAAGNDRPTNTKRFSDEATPVRPPGPSRSKKSSFSSFVNSMLGSPRGIKISAPENPVHVTHVGYDNQTGQFTGLPKEWQRLLQESGITQKEQEEHPQTMVDIMRFYEKNARGDDEVWHKFDHAYPQQPTAASPISQPAGSTTYGTQRTSPPTSPRFPQNHEGSFENPRAPPPIPRAAPIAAHAMSPPLGGLVPNRAPPKPPTAAANLVPSRPAPQPPTSSPYSNISTRPSPETQSPQFSTPPIPETEPLPSESQRSRSNSRTNGAQGPWPSVSPSHYQQQQEQAMAVAQQALANKQLERSRSQRQQQQSPRPDQMPIAQPALPQHAPSPEDVALTQASQTARAAPAARPRQRPRQSNAMDVRARLVAICTPGDPTKLYYNLNKIGQGASGGVFTAYEQHTNNCVAIKQMNLDLQPKKDLIINEILVMKDSKHKNIVNFLDSYLHGLDLWVVMEYMEGGSLTDVVTFNIMSEPQIAAVCRETLNGLQHLHSKGVIHRDIKSDNILLSLDGNIKLTDFGFCAQINDSQNKRNTMVGTPYWMAPEVVTRKEYGRKVDIWSLGIMAIEMIEGEPPYLTESPLRALYLIATNGTPKIKDEHNLSPVFKDFLHFALRVDPEKRASAHDLLKHPFMNLCAPLNHLSPLVKAARISRAQEKAQKGGV</sequence>
<protein>
    <recommendedName>
        <fullName>Serine/threonine-protein kinase ste20</fullName>
        <ecNumber>2.7.11.1</ecNumber>
    </recommendedName>
</protein>
<proteinExistence type="inferred from homology"/>
<name>STE20_EMENI</name>
<evidence type="ECO:0000250" key="1"/>
<evidence type="ECO:0000255" key="2">
    <source>
        <dbReference type="PROSITE-ProRule" id="PRU00057"/>
    </source>
</evidence>
<evidence type="ECO:0000255" key="3">
    <source>
        <dbReference type="PROSITE-ProRule" id="PRU00159"/>
    </source>
</evidence>
<evidence type="ECO:0000255" key="4">
    <source>
        <dbReference type="PROSITE-ProRule" id="PRU10027"/>
    </source>
</evidence>
<evidence type="ECO:0000256" key="5">
    <source>
        <dbReference type="SAM" id="MobiDB-lite"/>
    </source>
</evidence>
<evidence type="ECO:0000305" key="6"/>
<comment type="function">
    <text evidence="1">MAP4K component of the MAPK pathway required for the mating pheromone response and the regulation of cell polarity and cell cycle.</text>
</comment>
<comment type="catalytic activity">
    <reaction>
        <text>L-seryl-[protein] + ATP = O-phospho-L-seryl-[protein] + ADP + H(+)</text>
        <dbReference type="Rhea" id="RHEA:17989"/>
        <dbReference type="Rhea" id="RHEA-COMP:9863"/>
        <dbReference type="Rhea" id="RHEA-COMP:11604"/>
        <dbReference type="ChEBI" id="CHEBI:15378"/>
        <dbReference type="ChEBI" id="CHEBI:29999"/>
        <dbReference type="ChEBI" id="CHEBI:30616"/>
        <dbReference type="ChEBI" id="CHEBI:83421"/>
        <dbReference type="ChEBI" id="CHEBI:456216"/>
        <dbReference type="EC" id="2.7.11.1"/>
    </reaction>
</comment>
<comment type="catalytic activity">
    <reaction>
        <text>L-threonyl-[protein] + ATP = O-phospho-L-threonyl-[protein] + ADP + H(+)</text>
        <dbReference type="Rhea" id="RHEA:46608"/>
        <dbReference type="Rhea" id="RHEA-COMP:11060"/>
        <dbReference type="Rhea" id="RHEA-COMP:11605"/>
        <dbReference type="ChEBI" id="CHEBI:15378"/>
        <dbReference type="ChEBI" id="CHEBI:30013"/>
        <dbReference type="ChEBI" id="CHEBI:30616"/>
        <dbReference type="ChEBI" id="CHEBI:61977"/>
        <dbReference type="ChEBI" id="CHEBI:456216"/>
        <dbReference type="EC" id="2.7.11.1"/>
    </reaction>
</comment>
<comment type="subcellular location">
    <subcellularLocation>
        <location evidence="1">Cytoplasm</location>
    </subcellularLocation>
    <subcellularLocation>
        <location evidence="1">Nucleus</location>
    </subcellularLocation>
</comment>
<comment type="similarity">
    <text evidence="6">Belongs to the protein kinase superfamily. STE Ser/Thr protein kinase family. STE20 subfamily.</text>
</comment>